<accession>P04245</accession>
<organism>
    <name type="scientific">Tragelaphus strepsiceros</name>
    <name type="common">Greater kudu</name>
    <dbReference type="NCBI Taxonomy" id="9946"/>
    <lineage>
        <taxon>Eukaryota</taxon>
        <taxon>Metazoa</taxon>
        <taxon>Chordata</taxon>
        <taxon>Craniata</taxon>
        <taxon>Vertebrata</taxon>
        <taxon>Euteleostomi</taxon>
        <taxon>Mammalia</taxon>
        <taxon>Eutheria</taxon>
        <taxon>Laurasiatheria</taxon>
        <taxon>Artiodactyla</taxon>
        <taxon>Ruminantia</taxon>
        <taxon>Pecora</taxon>
        <taxon>Bovidae</taxon>
        <taxon>Bovinae</taxon>
        <taxon>Tragelaphus</taxon>
    </lineage>
</organism>
<proteinExistence type="evidence at protein level"/>
<name>HBB_TRAST</name>
<reference key="1">
    <citation type="journal article" date="1985" name="Biol. Chem. Hoppe-Seyler">
        <title>Primary structure of the hemoglobins from the greater Kudu antelope (Tragelaphus strepsiceros).</title>
        <authorList>
            <person name="Rodewald K."/>
            <person name="Wiesner H."/>
            <person name="Braunitzer G."/>
        </authorList>
    </citation>
    <scope>PROTEIN SEQUENCE</scope>
</reference>
<keyword id="KW-0007">Acetylation</keyword>
<keyword id="KW-0903">Direct protein sequencing</keyword>
<keyword id="KW-0349">Heme</keyword>
<keyword id="KW-0408">Iron</keyword>
<keyword id="KW-0479">Metal-binding</keyword>
<keyword id="KW-0561">Oxygen transport</keyword>
<keyword id="KW-0597">Phosphoprotein</keyword>
<keyword id="KW-0702">S-nitrosylation</keyword>
<keyword id="KW-0813">Transport</keyword>
<gene>
    <name type="primary">HBB</name>
</gene>
<comment type="function">
    <text>Involved in oxygen transport from the lung to the various peripheral tissues.</text>
</comment>
<comment type="subunit">
    <text>Heterotetramer of two alpha chains and two beta chains.</text>
</comment>
<comment type="tissue specificity">
    <text>Red blood cells.</text>
</comment>
<comment type="similarity">
    <text evidence="2">Belongs to the globin family.</text>
</comment>
<sequence>MLTAEEKAAVTAFWGKVKVDEVGGEALGRLLVVYPWTQRFFESFGDLSTADAVMNNPKVKAHGKKVLDSFSNGMKHLDDLKGTFAALSELHCDKLHVDPENFKLLGNVLVVVLARHFGKEFTPELQADYQKVVTGVANALAHRYH</sequence>
<protein>
    <recommendedName>
        <fullName>Hemoglobin subunit beta</fullName>
    </recommendedName>
    <alternativeName>
        <fullName>Beta-globin</fullName>
    </alternativeName>
    <alternativeName>
        <fullName>Hemoglobin beta chain</fullName>
    </alternativeName>
</protein>
<evidence type="ECO:0000250" key="1">
    <source>
        <dbReference type="UniProtKB" id="P68871"/>
    </source>
</evidence>
<evidence type="ECO:0000255" key="2">
    <source>
        <dbReference type="PROSITE-ProRule" id="PRU00238"/>
    </source>
</evidence>
<feature type="chain" id="PRO_0000053133" description="Hemoglobin subunit beta">
    <location>
        <begin position="1"/>
        <end position="145"/>
    </location>
</feature>
<feature type="domain" description="Globin" evidence="2">
    <location>
        <begin position="1"/>
        <end position="145"/>
    </location>
</feature>
<feature type="binding site" description="distal binding residue">
    <location>
        <position position="62"/>
    </location>
    <ligand>
        <name>heme b</name>
        <dbReference type="ChEBI" id="CHEBI:60344"/>
    </ligand>
    <ligandPart>
        <name>Fe</name>
        <dbReference type="ChEBI" id="CHEBI:18248"/>
    </ligandPart>
</feature>
<feature type="binding site" description="proximal binding residue">
    <location>
        <position position="91"/>
    </location>
    <ligand>
        <name>heme b</name>
        <dbReference type="ChEBI" id="CHEBI:60344"/>
    </ligand>
    <ligandPart>
        <name>Fe</name>
        <dbReference type="ChEBI" id="CHEBI:18248"/>
    </ligandPart>
</feature>
<feature type="modified residue" description="Phosphothreonine" evidence="1">
    <location>
        <position position="11"/>
    </location>
</feature>
<feature type="modified residue" description="Phosphoserine" evidence="1">
    <location>
        <position position="43"/>
    </location>
</feature>
<feature type="modified residue" description="N6-acetyllysine" evidence="1">
    <location>
        <position position="58"/>
    </location>
</feature>
<feature type="modified residue" description="N6-acetyllysine" evidence="1">
    <location>
        <position position="81"/>
    </location>
</feature>
<feature type="modified residue" description="S-nitrosocysteine" evidence="1">
    <location>
        <position position="92"/>
    </location>
</feature>
<feature type="sequence variant" description="In a second allele.">
    <original>G</original>
    <variation>S</variation>
    <location>
        <position position="15"/>
    </location>
</feature>
<dbReference type="PIR" id="A02391">
    <property type="entry name" value="HBBOKA"/>
</dbReference>
<dbReference type="SMR" id="P04245"/>
<dbReference type="GO" id="GO:0072562">
    <property type="term" value="C:blood microparticle"/>
    <property type="evidence" value="ECO:0007669"/>
    <property type="project" value="TreeGrafter"/>
</dbReference>
<dbReference type="GO" id="GO:0031838">
    <property type="term" value="C:haptoglobin-hemoglobin complex"/>
    <property type="evidence" value="ECO:0007669"/>
    <property type="project" value="TreeGrafter"/>
</dbReference>
<dbReference type="GO" id="GO:0005833">
    <property type="term" value="C:hemoglobin complex"/>
    <property type="evidence" value="ECO:0007669"/>
    <property type="project" value="InterPro"/>
</dbReference>
<dbReference type="GO" id="GO:0031720">
    <property type="term" value="F:haptoglobin binding"/>
    <property type="evidence" value="ECO:0007669"/>
    <property type="project" value="TreeGrafter"/>
</dbReference>
<dbReference type="GO" id="GO:0020037">
    <property type="term" value="F:heme binding"/>
    <property type="evidence" value="ECO:0007669"/>
    <property type="project" value="InterPro"/>
</dbReference>
<dbReference type="GO" id="GO:0031721">
    <property type="term" value="F:hemoglobin alpha binding"/>
    <property type="evidence" value="ECO:0007669"/>
    <property type="project" value="TreeGrafter"/>
</dbReference>
<dbReference type="GO" id="GO:0046872">
    <property type="term" value="F:metal ion binding"/>
    <property type="evidence" value="ECO:0007669"/>
    <property type="project" value="UniProtKB-KW"/>
</dbReference>
<dbReference type="GO" id="GO:0043177">
    <property type="term" value="F:organic acid binding"/>
    <property type="evidence" value="ECO:0007669"/>
    <property type="project" value="TreeGrafter"/>
</dbReference>
<dbReference type="GO" id="GO:0019825">
    <property type="term" value="F:oxygen binding"/>
    <property type="evidence" value="ECO:0007669"/>
    <property type="project" value="InterPro"/>
</dbReference>
<dbReference type="GO" id="GO:0005344">
    <property type="term" value="F:oxygen carrier activity"/>
    <property type="evidence" value="ECO:0007669"/>
    <property type="project" value="UniProtKB-KW"/>
</dbReference>
<dbReference type="GO" id="GO:0004601">
    <property type="term" value="F:peroxidase activity"/>
    <property type="evidence" value="ECO:0007669"/>
    <property type="project" value="TreeGrafter"/>
</dbReference>
<dbReference type="GO" id="GO:0042744">
    <property type="term" value="P:hydrogen peroxide catabolic process"/>
    <property type="evidence" value="ECO:0007669"/>
    <property type="project" value="TreeGrafter"/>
</dbReference>
<dbReference type="CDD" id="cd08925">
    <property type="entry name" value="Hb-beta-like"/>
    <property type="match status" value="1"/>
</dbReference>
<dbReference type="FunFam" id="1.10.490.10:FF:000001">
    <property type="entry name" value="Hemoglobin subunit beta"/>
    <property type="match status" value="1"/>
</dbReference>
<dbReference type="Gene3D" id="1.10.490.10">
    <property type="entry name" value="Globins"/>
    <property type="match status" value="1"/>
</dbReference>
<dbReference type="InterPro" id="IPR000971">
    <property type="entry name" value="Globin"/>
</dbReference>
<dbReference type="InterPro" id="IPR009050">
    <property type="entry name" value="Globin-like_sf"/>
</dbReference>
<dbReference type="InterPro" id="IPR012292">
    <property type="entry name" value="Globin/Proto"/>
</dbReference>
<dbReference type="InterPro" id="IPR002337">
    <property type="entry name" value="Hemoglobin_b"/>
</dbReference>
<dbReference type="InterPro" id="IPR050056">
    <property type="entry name" value="Hemoglobin_oxygen_transport"/>
</dbReference>
<dbReference type="PANTHER" id="PTHR11442">
    <property type="entry name" value="HEMOGLOBIN FAMILY MEMBER"/>
    <property type="match status" value="1"/>
</dbReference>
<dbReference type="PANTHER" id="PTHR11442:SF42">
    <property type="entry name" value="HEMOGLOBIN SUBUNIT BETA"/>
    <property type="match status" value="1"/>
</dbReference>
<dbReference type="Pfam" id="PF00042">
    <property type="entry name" value="Globin"/>
    <property type="match status" value="1"/>
</dbReference>
<dbReference type="PRINTS" id="PR00814">
    <property type="entry name" value="BETAHAEM"/>
</dbReference>
<dbReference type="SUPFAM" id="SSF46458">
    <property type="entry name" value="Globin-like"/>
    <property type="match status" value="1"/>
</dbReference>
<dbReference type="PROSITE" id="PS01033">
    <property type="entry name" value="GLOBIN"/>
    <property type="match status" value="1"/>
</dbReference>